<dbReference type="EC" id="3.7.1.3" evidence="1"/>
<dbReference type="EMBL" id="DS469623">
    <property type="protein sequence ID" value="EDO38606.1"/>
    <property type="molecule type" value="Genomic_DNA"/>
</dbReference>
<dbReference type="RefSeq" id="XP_001630669.1">
    <property type="nucleotide sequence ID" value="XM_001630619.1"/>
</dbReference>
<dbReference type="SMR" id="A7SCH8"/>
<dbReference type="STRING" id="45351.A7SCH8"/>
<dbReference type="EnsemblMetazoa" id="EDO38606">
    <property type="protein sequence ID" value="EDO38606"/>
    <property type="gene ID" value="NEMVEDRAFT_v1g235255"/>
</dbReference>
<dbReference type="GeneID" id="5510175"/>
<dbReference type="KEGG" id="nve:5510175"/>
<dbReference type="eggNOG" id="KOG3846">
    <property type="taxonomic scope" value="Eukaryota"/>
</dbReference>
<dbReference type="HOGENOM" id="CLU_003433_4_0_1"/>
<dbReference type="InParanoid" id="A7SCH8"/>
<dbReference type="OMA" id="LPGWNSH"/>
<dbReference type="OrthoDB" id="5978656at2759"/>
<dbReference type="PhylomeDB" id="A7SCH8"/>
<dbReference type="UniPathway" id="UPA00253">
    <property type="reaction ID" value="UER00329"/>
</dbReference>
<dbReference type="UniPathway" id="UPA00334">
    <property type="reaction ID" value="UER00455"/>
</dbReference>
<dbReference type="Proteomes" id="UP000001593">
    <property type="component" value="Unassembled WGS sequence"/>
</dbReference>
<dbReference type="GO" id="GO:0005737">
    <property type="term" value="C:cytoplasm"/>
    <property type="evidence" value="ECO:0000318"/>
    <property type="project" value="GO_Central"/>
</dbReference>
<dbReference type="GO" id="GO:0030429">
    <property type="term" value="F:kynureninase activity"/>
    <property type="evidence" value="ECO:0000318"/>
    <property type="project" value="GO_Central"/>
</dbReference>
<dbReference type="GO" id="GO:0030170">
    <property type="term" value="F:pyridoxal phosphate binding"/>
    <property type="evidence" value="ECO:0007669"/>
    <property type="project" value="UniProtKB-UniRule"/>
</dbReference>
<dbReference type="GO" id="GO:0034354">
    <property type="term" value="P:'de novo' NAD biosynthetic process from L-tryptophan"/>
    <property type="evidence" value="ECO:0007669"/>
    <property type="project" value="UniProtKB-UniRule"/>
</dbReference>
<dbReference type="GO" id="GO:0043420">
    <property type="term" value="P:anthranilate metabolic process"/>
    <property type="evidence" value="ECO:0000318"/>
    <property type="project" value="GO_Central"/>
</dbReference>
<dbReference type="GO" id="GO:0097053">
    <property type="term" value="P:L-kynurenine catabolic process"/>
    <property type="evidence" value="ECO:0007669"/>
    <property type="project" value="UniProtKB-UniRule"/>
</dbReference>
<dbReference type="GO" id="GO:0019441">
    <property type="term" value="P:L-tryptophan catabolic process to kynurenine"/>
    <property type="evidence" value="ECO:0000318"/>
    <property type="project" value="GO_Central"/>
</dbReference>
<dbReference type="GO" id="GO:0019805">
    <property type="term" value="P:quinolinate biosynthetic process"/>
    <property type="evidence" value="ECO:0007669"/>
    <property type="project" value="UniProtKB-UniRule"/>
</dbReference>
<dbReference type="FunFam" id="3.40.640.10:FF:000031">
    <property type="entry name" value="Kynureninase"/>
    <property type="match status" value="1"/>
</dbReference>
<dbReference type="Gene3D" id="3.90.1150.10">
    <property type="entry name" value="Aspartate Aminotransferase, domain 1"/>
    <property type="match status" value="1"/>
</dbReference>
<dbReference type="Gene3D" id="3.40.640.10">
    <property type="entry name" value="Type I PLP-dependent aspartate aminotransferase-like (Major domain)"/>
    <property type="match status" value="1"/>
</dbReference>
<dbReference type="HAMAP" id="MF_01970">
    <property type="entry name" value="Kynureninase"/>
    <property type="match status" value="1"/>
</dbReference>
<dbReference type="InterPro" id="IPR000192">
    <property type="entry name" value="Aminotrans_V_dom"/>
</dbReference>
<dbReference type="InterPro" id="IPR010111">
    <property type="entry name" value="Kynureninase"/>
</dbReference>
<dbReference type="InterPro" id="IPR015424">
    <property type="entry name" value="PyrdxlP-dep_Trfase"/>
</dbReference>
<dbReference type="InterPro" id="IPR015421">
    <property type="entry name" value="PyrdxlP-dep_Trfase_major"/>
</dbReference>
<dbReference type="InterPro" id="IPR015422">
    <property type="entry name" value="PyrdxlP-dep_Trfase_small"/>
</dbReference>
<dbReference type="NCBIfam" id="TIGR01814">
    <property type="entry name" value="kynureninase"/>
    <property type="match status" value="1"/>
</dbReference>
<dbReference type="PANTHER" id="PTHR14084">
    <property type="entry name" value="KYNURENINASE"/>
    <property type="match status" value="1"/>
</dbReference>
<dbReference type="PANTHER" id="PTHR14084:SF0">
    <property type="entry name" value="KYNURENINASE"/>
    <property type="match status" value="1"/>
</dbReference>
<dbReference type="Pfam" id="PF00266">
    <property type="entry name" value="Aminotran_5"/>
    <property type="match status" value="1"/>
</dbReference>
<dbReference type="Pfam" id="PF22580">
    <property type="entry name" value="KYNU_C"/>
    <property type="match status" value="1"/>
</dbReference>
<dbReference type="PIRSF" id="PIRSF038800">
    <property type="entry name" value="KYNU"/>
    <property type="match status" value="1"/>
</dbReference>
<dbReference type="SUPFAM" id="SSF53383">
    <property type="entry name" value="PLP-dependent transferases"/>
    <property type="match status" value="1"/>
</dbReference>
<keyword id="KW-0963">Cytoplasm</keyword>
<keyword id="KW-0378">Hydrolase</keyword>
<keyword id="KW-0662">Pyridine nucleotide biosynthesis</keyword>
<keyword id="KW-0663">Pyridoxal phosphate</keyword>
<keyword id="KW-1185">Reference proteome</keyword>
<protein>
    <recommendedName>
        <fullName evidence="1">Kynureninase</fullName>
        <ecNumber evidence="1">3.7.1.3</ecNumber>
    </recommendedName>
    <alternativeName>
        <fullName evidence="1">L-kynurenine hydrolase</fullName>
    </alternativeName>
</protein>
<evidence type="ECO:0000255" key="1">
    <source>
        <dbReference type="HAMAP-Rule" id="MF_03017"/>
    </source>
</evidence>
<organism>
    <name type="scientific">Nematostella vectensis</name>
    <name type="common">Starlet sea anemone</name>
    <dbReference type="NCBI Taxonomy" id="45351"/>
    <lineage>
        <taxon>Eukaryota</taxon>
        <taxon>Metazoa</taxon>
        <taxon>Cnidaria</taxon>
        <taxon>Anthozoa</taxon>
        <taxon>Hexacorallia</taxon>
        <taxon>Actiniaria</taxon>
        <taxon>Edwardsiidae</taxon>
        <taxon>Nematostella</taxon>
    </lineage>
</organism>
<proteinExistence type="inferred from homology"/>
<gene>
    <name evidence="1" type="primary">kynu</name>
    <name type="ORF">v1g235255</name>
</gene>
<accession>A7SCH8</accession>
<name>KYNU_NEMVE</name>
<feature type="chain" id="PRO_0000361088" description="Kynureninase">
    <location>
        <begin position="1"/>
        <end position="465"/>
    </location>
</feature>
<feature type="binding site" evidence="1">
    <location>
        <position position="133"/>
    </location>
    <ligand>
        <name>pyridoxal 5'-phosphate</name>
        <dbReference type="ChEBI" id="CHEBI:597326"/>
    </ligand>
</feature>
<feature type="binding site" evidence="1">
    <location>
        <position position="134"/>
    </location>
    <ligand>
        <name>pyridoxal 5'-phosphate</name>
        <dbReference type="ChEBI" id="CHEBI:597326"/>
    </ligand>
</feature>
<feature type="binding site" evidence="1">
    <location>
        <begin position="161"/>
        <end position="164"/>
    </location>
    <ligand>
        <name>pyridoxal 5'-phosphate</name>
        <dbReference type="ChEBI" id="CHEBI:597326"/>
    </ligand>
</feature>
<feature type="binding site" evidence="1">
    <location>
        <position position="217"/>
    </location>
    <ligand>
        <name>pyridoxal 5'-phosphate</name>
        <dbReference type="ChEBI" id="CHEBI:597326"/>
    </ligand>
</feature>
<feature type="binding site" evidence="1">
    <location>
        <position position="246"/>
    </location>
    <ligand>
        <name>pyridoxal 5'-phosphate</name>
        <dbReference type="ChEBI" id="CHEBI:597326"/>
    </ligand>
</feature>
<feature type="binding site" evidence="1">
    <location>
        <position position="249"/>
    </location>
    <ligand>
        <name>pyridoxal 5'-phosphate</name>
        <dbReference type="ChEBI" id="CHEBI:597326"/>
    </ligand>
</feature>
<feature type="binding site" evidence="1">
    <location>
        <position position="271"/>
    </location>
    <ligand>
        <name>pyridoxal 5'-phosphate</name>
        <dbReference type="ChEBI" id="CHEBI:597326"/>
    </ligand>
</feature>
<feature type="binding site" evidence="1">
    <location>
        <position position="302"/>
    </location>
    <ligand>
        <name>pyridoxal 5'-phosphate</name>
        <dbReference type="ChEBI" id="CHEBI:597326"/>
    </ligand>
</feature>
<feature type="binding site" evidence="1">
    <location>
        <position position="330"/>
    </location>
    <ligand>
        <name>pyridoxal 5'-phosphate</name>
        <dbReference type="ChEBI" id="CHEBI:597326"/>
    </ligand>
</feature>
<feature type="modified residue" description="N6-(pyridoxal phosphate)lysine" evidence="1">
    <location>
        <position position="272"/>
    </location>
</feature>
<comment type="function">
    <text evidence="1">Catalyzes the cleavage of L-kynurenine (L-Kyn) and L-3-hydroxykynurenine (L-3OHKyn) into anthranilic acid (AA) and 3-hydroxyanthranilic acid (3-OHAA), respectively.</text>
</comment>
<comment type="catalytic activity">
    <reaction evidence="1">
        <text>L-kynurenine + H2O = anthranilate + L-alanine + H(+)</text>
        <dbReference type="Rhea" id="RHEA:16813"/>
        <dbReference type="ChEBI" id="CHEBI:15377"/>
        <dbReference type="ChEBI" id="CHEBI:15378"/>
        <dbReference type="ChEBI" id="CHEBI:16567"/>
        <dbReference type="ChEBI" id="CHEBI:57959"/>
        <dbReference type="ChEBI" id="CHEBI:57972"/>
        <dbReference type="EC" id="3.7.1.3"/>
    </reaction>
</comment>
<comment type="catalytic activity">
    <reaction evidence="1">
        <text>3-hydroxy-L-kynurenine + H2O = 3-hydroxyanthranilate + L-alanine + H(+)</text>
        <dbReference type="Rhea" id="RHEA:25143"/>
        <dbReference type="ChEBI" id="CHEBI:15377"/>
        <dbReference type="ChEBI" id="CHEBI:15378"/>
        <dbReference type="ChEBI" id="CHEBI:36559"/>
        <dbReference type="ChEBI" id="CHEBI:57972"/>
        <dbReference type="ChEBI" id="CHEBI:58125"/>
        <dbReference type="EC" id="3.7.1.3"/>
    </reaction>
</comment>
<comment type="cofactor">
    <cofactor evidence="1">
        <name>pyridoxal 5'-phosphate</name>
        <dbReference type="ChEBI" id="CHEBI:597326"/>
    </cofactor>
</comment>
<comment type="pathway">
    <text evidence="1">Amino-acid degradation; L-kynurenine degradation; L-alanine and anthranilate from L-kynurenine: step 1/1.</text>
</comment>
<comment type="pathway">
    <text evidence="1">Cofactor biosynthesis; NAD(+) biosynthesis; quinolinate from L-kynurenine: step 2/3.</text>
</comment>
<comment type="subunit">
    <text evidence="1">Homodimer.</text>
</comment>
<comment type="subcellular location">
    <subcellularLocation>
        <location evidence="1">Cytoplasm</location>
    </subcellularLocation>
</comment>
<comment type="similarity">
    <text evidence="1">Belongs to the kynureninase family.</text>
</comment>
<reference key="1">
    <citation type="journal article" date="2007" name="Science">
        <title>Sea anemone genome reveals ancestral eumetazoan gene repertoire and genomic organization.</title>
        <authorList>
            <person name="Putnam N.H."/>
            <person name="Srivastava M."/>
            <person name="Hellsten U."/>
            <person name="Dirks B."/>
            <person name="Chapman J."/>
            <person name="Salamov A."/>
            <person name="Terry A."/>
            <person name="Shapiro H."/>
            <person name="Lindquist E."/>
            <person name="Kapitonov V.V."/>
            <person name="Jurka J."/>
            <person name="Genikhovich G."/>
            <person name="Grigoriev I.V."/>
            <person name="Lucas S.M."/>
            <person name="Steele R.E."/>
            <person name="Finnerty J.R."/>
            <person name="Technau U."/>
            <person name="Martindale M.Q."/>
            <person name="Rokhsar D.S."/>
        </authorList>
    </citation>
    <scope>NUCLEOTIDE SEQUENCE [LARGE SCALE GENOMIC DNA]</scope>
    <source>
        <strain>CH2 X CH6</strain>
    </source>
</reference>
<sequence>MAYKPTQTLRKLAEKSSLDIVSREFADYMDSKDPLRKMRDEFFYPRVKDLPGVDLSLVDGDQDSIYFCGNSLGLQPRGCRELIDRSLTKWEQMGVLGHTSGWCPWKPIEDILIKPMAEIIGAKDIEVVAMNTLTVNLHMMMVPFYRPTPQRYKILMEGKAFPSDQYAAQSQVHFHGFDPDKDIIEVFPREGEQSLRTEDILSAIEEHGNSITLVLFSGVQYYTGQFFDMKTITAAAQKKGCVVGWDLAHAVGNVELHLHDWNVDFACWCTYKYLNSGPGGIAGAFVHEKHAYNFELPKFAGWWGTDRNSRFQMRKEFEQIPGAHGYQCSNPPVFQCLLLRASLDVFEKTSVKEIRAKGDLLTAYLELLLLHYFSPSNDITKNGNTPHVSIITPADPKDRGCQLSVKFSVPVDKVFEELCKRGFVGDIRHPDVMRIAPAPLYNSFADVHRFISMLNAAFKTITPNS</sequence>